<name>PDXS_CLOBL</name>
<organism>
    <name type="scientific">Clostridium botulinum (strain Langeland / NCTC 10281 / Type F)</name>
    <dbReference type="NCBI Taxonomy" id="441772"/>
    <lineage>
        <taxon>Bacteria</taxon>
        <taxon>Bacillati</taxon>
        <taxon>Bacillota</taxon>
        <taxon>Clostridia</taxon>
        <taxon>Eubacteriales</taxon>
        <taxon>Clostridiaceae</taxon>
        <taxon>Clostridium</taxon>
    </lineage>
</organism>
<comment type="function">
    <text evidence="1">Catalyzes the formation of pyridoxal 5'-phosphate from ribose 5-phosphate (RBP), glyceraldehyde 3-phosphate (G3P) and ammonia. The ammonia is provided by the PdxT subunit. Can also use ribulose 5-phosphate and dihydroxyacetone phosphate as substrates, resulting from enzyme-catalyzed isomerization of RBP and G3P, respectively.</text>
</comment>
<comment type="catalytic activity">
    <reaction evidence="1">
        <text>aldehydo-D-ribose 5-phosphate + D-glyceraldehyde 3-phosphate + L-glutamine = pyridoxal 5'-phosphate + L-glutamate + phosphate + 3 H2O + H(+)</text>
        <dbReference type="Rhea" id="RHEA:31507"/>
        <dbReference type="ChEBI" id="CHEBI:15377"/>
        <dbReference type="ChEBI" id="CHEBI:15378"/>
        <dbReference type="ChEBI" id="CHEBI:29985"/>
        <dbReference type="ChEBI" id="CHEBI:43474"/>
        <dbReference type="ChEBI" id="CHEBI:58273"/>
        <dbReference type="ChEBI" id="CHEBI:58359"/>
        <dbReference type="ChEBI" id="CHEBI:59776"/>
        <dbReference type="ChEBI" id="CHEBI:597326"/>
        <dbReference type="EC" id="4.3.3.6"/>
    </reaction>
</comment>
<comment type="pathway">
    <text evidence="1">Cofactor biosynthesis; pyridoxal 5'-phosphate biosynthesis.</text>
</comment>
<comment type="subunit">
    <text evidence="1">In the presence of PdxT, forms a dodecamer of heterodimers.</text>
</comment>
<comment type="similarity">
    <text evidence="1">Belongs to the PdxS/SNZ family.</text>
</comment>
<proteinExistence type="inferred from homology"/>
<sequence>MEKKYELNKNLAQMIKNGVIMDVVNPEQAKIAEEAGAIAVMALERVPSDIRKQGGVARTSDPKMIKEIINAVSIPVMAKVRIGHFVEAQILEAIGVDCIDESEVLTPADDLFHINKKDFKVPFVCGARNLGEALRRIGEGASMIRTKGEAGTGNVVEAVRHMRTISSEMRKLQLTPKEELMTVAKEMGAPFNLIEYVAEKGKLPVINFAAGGIATPADAALMMQLGCDGIFVGSGIFKSDSPEKRAKAIVKATTYFKDPDVLAKVSENLGGAMSGLEISKLETEFAERGW</sequence>
<gene>
    <name evidence="1" type="primary">pdxS</name>
    <name type="ordered locus">CLI_2850</name>
</gene>
<evidence type="ECO:0000255" key="1">
    <source>
        <dbReference type="HAMAP-Rule" id="MF_01824"/>
    </source>
</evidence>
<protein>
    <recommendedName>
        <fullName evidence="1">Pyridoxal 5'-phosphate synthase subunit PdxS</fullName>
        <shortName evidence="1">PLP synthase subunit PdxS</shortName>
        <ecNumber evidence="1">4.3.3.6</ecNumber>
    </recommendedName>
    <alternativeName>
        <fullName evidence="1">Pdx1</fullName>
    </alternativeName>
</protein>
<keyword id="KW-0456">Lyase</keyword>
<keyword id="KW-0663">Pyridoxal phosphate</keyword>
<keyword id="KW-0704">Schiff base</keyword>
<feature type="chain" id="PRO_1000070366" description="Pyridoxal 5'-phosphate synthase subunit PdxS">
    <location>
        <begin position="1"/>
        <end position="290"/>
    </location>
</feature>
<feature type="active site" description="Schiff-base intermediate with D-ribose 5-phosphate" evidence="1">
    <location>
        <position position="79"/>
    </location>
</feature>
<feature type="binding site" evidence="1">
    <location>
        <position position="22"/>
    </location>
    <ligand>
        <name>D-ribose 5-phosphate</name>
        <dbReference type="ChEBI" id="CHEBI:78346"/>
    </ligand>
</feature>
<feature type="binding site" evidence="1">
    <location>
        <position position="151"/>
    </location>
    <ligand>
        <name>D-ribose 5-phosphate</name>
        <dbReference type="ChEBI" id="CHEBI:78346"/>
    </ligand>
</feature>
<feature type="binding site" evidence="1">
    <location>
        <position position="163"/>
    </location>
    <ligand>
        <name>D-glyceraldehyde 3-phosphate</name>
        <dbReference type="ChEBI" id="CHEBI:59776"/>
    </ligand>
</feature>
<feature type="binding site" evidence="1">
    <location>
        <position position="212"/>
    </location>
    <ligand>
        <name>D-ribose 5-phosphate</name>
        <dbReference type="ChEBI" id="CHEBI:78346"/>
    </ligand>
</feature>
<feature type="binding site" evidence="1">
    <location>
        <begin position="233"/>
        <end position="234"/>
    </location>
    <ligand>
        <name>D-ribose 5-phosphate</name>
        <dbReference type="ChEBI" id="CHEBI:78346"/>
    </ligand>
</feature>
<reference key="1">
    <citation type="submission" date="2007-06" db="EMBL/GenBank/DDBJ databases">
        <authorList>
            <person name="Brinkac L.M."/>
            <person name="Daugherty S."/>
            <person name="Dodson R.J."/>
            <person name="Madupu R."/>
            <person name="Brown J.L."/>
            <person name="Bruce D."/>
            <person name="Detter C."/>
            <person name="Munk C."/>
            <person name="Smith L.A."/>
            <person name="Smith T.J."/>
            <person name="White O."/>
            <person name="Brettin T.S."/>
        </authorList>
    </citation>
    <scope>NUCLEOTIDE SEQUENCE [LARGE SCALE GENOMIC DNA]</scope>
    <source>
        <strain>Langeland / NCTC 10281 / Type F</strain>
    </source>
</reference>
<dbReference type="EC" id="4.3.3.6" evidence="1"/>
<dbReference type="EMBL" id="CP000728">
    <property type="protein sequence ID" value="ABS42019.1"/>
    <property type="molecule type" value="Genomic_DNA"/>
</dbReference>
<dbReference type="RefSeq" id="WP_012100603.1">
    <property type="nucleotide sequence ID" value="NC_009699.1"/>
</dbReference>
<dbReference type="SMR" id="A7GH18"/>
<dbReference type="KEGG" id="cbf:CLI_2850"/>
<dbReference type="HOGENOM" id="CLU_055352_1_0_9"/>
<dbReference type="UniPathway" id="UPA00245"/>
<dbReference type="Proteomes" id="UP000002410">
    <property type="component" value="Chromosome"/>
</dbReference>
<dbReference type="GO" id="GO:0036381">
    <property type="term" value="F:pyridoxal 5'-phosphate synthase (glutamine hydrolysing) activity"/>
    <property type="evidence" value="ECO:0007669"/>
    <property type="project" value="UniProtKB-UniRule"/>
</dbReference>
<dbReference type="GO" id="GO:0006520">
    <property type="term" value="P:amino acid metabolic process"/>
    <property type="evidence" value="ECO:0007669"/>
    <property type="project" value="TreeGrafter"/>
</dbReference>
<dbReference type="GO" id="GO:0042823">
    <property type="term" value="P:pyridoxal phosphate biosynthetic process"/>
    <property type="evidence" value="ECO:0007669"/>
    <property type="project" value="UniProtKB-UniRule"/>
</dbReference>
<dbReference type="GO" id="GO:0008615">
    <property type="term" value="P:pyridoxine biosynthetic process"/>
    <property type="evidence" value="ECO:0007669"/>
    <property type="project" value="TreeGrafter"/>
</dbReference>
<dbReference type="CDD" id="cd04727">
    <property type="entry name" value="pdxS"/>
    <property type="match status" value="1"/>
</dbReference>
<dbReference type="FunFam" id="3.20.20.70:FF:000001">
    <property type="entry name" value="Pyridoxine biosynthesis protein PDX1"/>
    <property type="match status" value="1"/>
</dbReference>
<dbReference type="Gene3D" id="3.20.20.70">
    <property type="entry name" value="Aldolase class I"/>
    <property type="match status" value="1"/>
</dbReference>
<dbReference type="HAMAP" id="MF_01824">
    <property type="entry name" value="PdxS"/>
    <property type="match status" value="1"/>
</dbReference>
<dbReference type="InterPro" id="IPR013785">
    <property type="entry name" value="Aldolase_TIM"/>
</dbReference>
<dbReference type="InterPro" id="IPR001852">
    <property type="entry name" value="PdxS/SNZ"/>
</dbReference>
<dbReference type="InterPro" id="IPR033755">
    <property type="entry name" value="PdxS/SNZ_N"/>
</dbReference>
<dbReference type="InterPro" id="IPR011060">
    <property type="entry name" value="RibuloseP-bd_barrel"/>
</dbReference>
<dbReference type="NCBIfam" id="NF003215">
    <property type="entry name" value="PRK04180.1"/>
    <property type="match status" value="1"/>
</dbReference>
<dbReference type="NCBIfam" id="TIGR00343">
    <property type="entry name" value="pyridoxal 5'-phosphate synthase lyase subunit PdxS"/>
    <property type="match status" value="1"/>
</dbReference>
<dbReference type="PANTHER" id="PTHR31829">
    <property type="entry name" value="PYRIDOXAL 5'-PHOSPHATE SYNTHASE SUBUNIT SNZ1-RELATED"/>
    <property type="match status" value="1"/>
</dbReference>
<dbReference type="PANTHER" id="PTHR31829:SF0">
    <property type="entry name" value="PYRIDOXAL 5'-PHOSPHATE SYNTHASE SUBUNIT SNZ1-RELATED"/>
    <property type="match status" value="1"/>
</dbReference>
<dbReference type="Pfam" id="PF01680">
    <property type="entry name" value="SOR_SNZ"/>
    <property type="match status" value="1"/>
</dbReference>
<dbReference type="PIRSF" id="PIRSF029271">
    <property type="entry name" value="Pdx1"/>
    <property type="match status" value="1"/>
</dbReference>
<dbReference type="SUPFAM" id="SSF51366">
    <property type="entry name" value="Ribulose-phoshate binding barrel"/>
    <property type="match status" value="1"/>
</dbReference>
<dbReference type="PROSITE" id="PS01235">
    <property type="entry name" value="PDXS_SNZ_1"/>
    <property type="match status" value="1"/>
</dbReference>
<dbReference type="PROSITE" id="PS51129">
    <property type="entry name" value="PDXS_SNZ_2"/>
    <property type="match status" value="1"/>
</dbReference>
<accession>A7GH18</accession>